<keyword id="KW-0025">Alternative splicing</keyword>
<keyword id="KW-0068">Autocatalytic cleavage</keyword>
<keyword id="KW-0158">Chromosome</keyword>
<keyword id="KW-0378">Hydrolase</keyword>
<keyword id="KW-0472">Membrane</keyword>
<keyword id="KW-0509">mRNA transport</keyword>
<keyword id="KW-0906">Nuclear pore complex</keyword>
<keyword id="KW-0539">Nucleus</keyword>
<keyword id="KW-0645">Protease</keyword>
<keyword id="KW-0653">Protein transport</keyword>
<keyword id="KW-1185">Reference proteome</keyword>
<keyword id="KW-0677">Repeat</keyword>
<keyword id="KW-0720">Serine protease</keyword>
<keyword id="KW-0804">Transcription</keyword>
<keyword id="KW-0805">Transcription regulation</keyword>
<keyword id="KW-0811">Translocation</keyword>
<keyword id="KW-0813">Transport</keyword>
<gene>
    <name evidence="21" type="primary">Nup98-96</name>
    <name evidence="15" type="synonym">Nup145</name>
    <name evidence="21" type="synonym">Nup98</name>
    <name evidence="21" type="ORF">CG10198</name>
</gene>
<name>NUP98_DROME</name>
<feature type="chain" id="PRO_0000443442" description="Nuclear pore complex protein Nup98" evidence="18">
    <location>
        <begin position="1"/>
        <end position="1028"/>
    </location>
</feature>
<feature type="chain" id="PRO_0000443443" description="Nuclear pore complex protein Nup96" evidence="18">
    <location>
        <begin position="1029"/>
        <end position="1960"/>
    </location>
</feature>
<feature type="repeat" description="1" evidence="18">
    <location>
        <begin position="2"/>
        <end position="3"/>
    </location>
</feature>
<feature type="repeat" description="2" evidence="18">
    <location>
        <begin position="9"/>
        <end position="10"/>
    </location>
</feature>
<feature type="repeat" description="3" evidence="18">
    <location>
        <begin position="18"/>
        <end position="19"/>
    </location>
</feature>
<feature type="repeat" description="4" evidence="18">
    <location>
        <begin position="30"/>
        <end position="31"/>
    </location>
</feature>
<feature type="repeat" description="5" evidence="18">
    <location>
        <begin position="35"/>
        <end position="36"/>
    </location>
</feature>
<feature type="repeat" description="6" evidence="18">
    <location>
        <begin position="43"/>
        <end position="44"/>
    </location>
</feature>
<feature type="repeat" description="7" evidence="18">
    <location>
        <begin position="59"/>
        <end position="60"/>
    </location>
</feature>
<feature type="repeat" description="8" evidence="18">
    <location>
        <begin position="73"/>
        <end position="74"/>
    </location>
</feature>
<feature type="repeat" description="9" evidence="18">
    <location>
        <begin position="81"/>
        <end position="82"/>
    </location>
</feature>
<feature type="repeat" description="10" evidence="18">
    <location>
        <begin position="92"/>
        <end position="93"/>
    </location>
</feature>
<feature type="repeat" description="11" evidence="18">
    <location>
        <begin position="105"/>
        <end position="106"/>
    </location>
</feature>
<feature type="repeat" description="12" evidence="18">
    <location>
        <begin position="117"/>
        <end position="118"/>
    </location>
</feature>
<feature type="repeat" description="13" evidence="18">
    <location>
        <begin position="125"/>
        <end position="126"/>
    </location>
</feature>
<feature type="repeat" description="14" evidence="18">
    <location>
        <begin position="135"/>
        <end position="136"/>
    </location>
</feature>
<feature type="repeat" description="15" evidence="18">
    <location>
        <begin position="148"/>
        <end position="149"/>
    </location>
</feature>
<feature type="repeat" description="16" evidence="18">
    <location>
        <begin position="160"/>
        <end position="161"/>
    </location>
</feature>
<feature type="repeat" description="17" evidence="18">
    <location>
        <begin position="163"/>
        <end position="164"/>
    </location>
</feature>
<feature type="repeat" description="18" evidence="18">
    <location>
        <begin position="174"/>
        <end position="175"/>
    </location>
</feature>
<feature type="repeat" description="19" evidence="18">
    <location>
        <begin position="264"/>
        <end position="265"/>
    </location>
</feature>
<feature type="repeat" description="20" evidence="18">
    <location>
        <begin position="266"/>
        <end position="267"/>
    </location>
</feature>
<feature type="repeat" description="21" evidence="18">
    <location>
        <begin position="282"/>
        <end position="283"/>
    </location>
</feature>
<feature type="repeat" description="22" evidence="18">
    <location>
        <begin position="293"/>
        <end position="294"/>
    </location>
</feature>
<feature type="repeat" description="23" evidence="18">
    <location>
        <begin position="304"/>
        <end position="305"/>
    </location>
</feature>
<feature type="repeat" description="24" evidence="18">
    <location>
        <begin position="309"/>
        <end position="310"/>
    </location>
</feature>
<feature type="repeat" description="25" evidence="18">
    <location>
        <begin position="319"/>
        <end position="320"/>
    </location>
</feature>
<feature type="repeat" description="26" evidence="18">
    <location>
        <begin position="333"/>
        <end position="334"/>
    </location>
</feature>
<feature type="repeat" description="27" evidence="18">
    <location>
        <begin position="352"/>
        <end position="353"/>
    </location>
</feature>
<feature type="repeat" description="28" evidence="18">
    <location>
        <begin position="358"/>
        <end position="359"/>
    </location>
</feature>
<feature type="repeat" description="29" evidence="18">
    <location>
        <begin position="365"/>
        <end position="366"/>
    </location>
</feature>
<feature type="repeat" description="30" evidence="18">
    <location>
        <begin position="377"/>
        <end position="378"/>
    </location>
</feature>
<feature type="repeat" description="31" evidence="18">
    <location>
        <begin position="384"/>
        <end position="385"/>
    </location>
</feature>
<feature type="repeat" description="32" evidence="18">
    <location>
        <begin position="387"/>
        <end position="388"/>
    </location>
</feature>
<feature type="repeat" description="33" evidence="18">
    <location>
        <begin position="400"/>
        <end position="401"/>
    </location>
</feature>
<feature type="repeat" description="34" evidence="18">
    <location>
        <begin position="413"/>
        <end position="414"/>
    </location>
</feature>
<feature type="repeat" description="35" evidence="18">
    <location>
        <begin position="426"/>
        <end position="427"/>
    </location>
</feature>
<feature type="repeat" description="36" evidence="18">
    <location>
        <begin position="428"/>
        <end position="429"/>
    </location>
</feature>
<feature type="repeat" description="37" evidence="18">
    <location>
        <begin position="441"/>
        <end position="442"/>
    </location>
</feature>
<feature type="repeat" description="38" evidence="18">
    <location>
        <begin position="454"/>
        <end position="455"/>
    </location>
</feature>
<feature type="repeat" description="39" evidence="18">
    <location>
        <begin position="467"/>
        <end position="468"/>
    </location>
</feature>
<feature type="repeat" description="40" evidence="18">
    <location>
        <begin position="493"/>
        <end position="494"/>
    </location>
</feature>
<feature type="repeat" description="41" evidence="18">
    <location>
        <begin position="496"/>
        <end position="497"/>
    </location>
</feature>
<feature type="repeat" description="42" evidence="18">
    <location>
        <begin position="516"/>
        <end position="517"/>
    </location>
</feature>
<feature type="repeat" description="43" evidence="18">
    <location>
        <begin position="527"/>
        <end position="528"/>
    </location>
</feature>
<feature type="repeat" description="44" evidence="18">
    <location>
        <begin position="546"/>
        <end position="547"/>
    </location>
</feature>
<feature type="repeat" description="45" evidence="18">
    <location>
        <begin position="553"/>
        <end position="554"/>
    </location>
</feature>
<feature type="repeat" description="46" evidence="18">
    <location>
        <begin position="565"/>
        <end position="566"/>
    </location>
</feature>
<feature type="domain" description="Peptidase S59" evidence="2">
    <location>
        <begin position="886"/>
        <end position="1028"/>
    </location>
</feature>
<feature type="region of interest" description="46 X 2 AA repeats of F-G" evidence="18">
    <location>
        <begin position="2"/>
        <end position="566"/>
    </location>
</feature>
<feature type="region of interest" description="Disordered" evidence="3">
    <location>
        <begin position="698"/>
        <end position="768"/>
    </location>
</feature>
<feature type="region of interest" description="Disordered" evidence="3">
    <location>
        <begin position="781"/>
        <end position="860"/>
    </location>
</feature>
<feature type="compositionally biased region" description="Polar residues" evidence="3">
    <location>
        <begin position="704"/>
        <end position="718"/>
    </location>
</feature>
<feature type="compositionally biased region" description="Basic and acidic residues" evidence="3">
    <location>
        <begin position="755"/>
        <end position="768"/>
    </location>
</feature>
<feature type="compositionally biased region" description="Polar residues" evidence="3">
    <location>
        <begin position="781"/>
        <end position="794"/>
    </location>
</feature>
<feature type="compositionally biased region" description="Polar residues" evidence="3">
    <location>
        <begin position="806"/>
        <end position="850"/>
    </location>
</feature>
<feature type="active site" description="Nucleophile" evidence="1">
    <location>
        <position position="1029"/>
    </location>
</feature>
<feature type="site" description="Cleavage; by autolysis" evidence="1">
    <location>
        <begin position="1028"/>
        <end position="1029"/>
    </location>
</feature>
<feature type="splice variant" id="VSP_059347" description="In isoform C.">
    <original>ETTGRL</original>
    <variation>GRWIIS</variation>
    <location>
        <begin position="1174"/>
        <end position="1179"/>
    </location>
</feature>
<feature type="splice variant" id="VSP_059348" description="In isoform C.">
    <location>
        <begin position="1180"/>
        <end position="1960"/>
    </location>
</feature>
<feature type="sequence conflict" description="In Ref. 3; AAR82742." evidence="18" ref="3">
    <original>Q</original>
    <variation>R</variation>
    <location>
        <position position="860"/>
    </location>
</feature>
<reference evidence="22" key="1">
    <citation type="journal article" date="2000" name="Science">
        <title>The genome sequence of Drosophila melanogaster.</title>
        <authorList>
            <person name="Adams M.D."/>
            <person name="Celniker S.E."/>
            <person name="Holt R.A."/>
            <person name="Evans C.A."/>
            <person name="Gocayne J.D."/>
            <person name="Amanatides P.G."/>
            <person name="Scherer S.E."/>
            <person name="Li P.W."/>
            <person name="Hoskins R.A."/>
            <person name="Galle R.F."/>
            <person name="George R.A."/>
            <person name="Lewis S.E."/>
            <person name="Richards S."/>
            <person name="Ashburner M."/>
            <person name="Henderson S.N."/>
            <person name="Sutton G.G."/>
            <person name="Wortman J.R."/>
            <person name="Yandell M.D."/>
            <person name="Zhang Q."/>
            <person name="Chen L.X."/>
            <person name="Brandon R.C."/>
            <person name="Rogers Y.-H.C."/>
            <person name="Blazej R.G."/>
            <person name="Champe M."/>
            <person name="Pfeiffer B.D."/>
            <person name="Wan K.H."/>
            <person name="Doyle C."/>
            <person name="Baxter E.G."/>
            <person name="Helt G."/>
            <person name="Nelson C.R."/>
            <person name="Miklos G.L.G."/>
            <person name="Abril J.F."/>
            <person name="Agbayani A."/>
            <person name="An H.-J."/>
            <person name="Andrews-Pfannkoch C."/>
            <person name="Baldwin D."/>
            <person name="Ballew R.M."/>
            <person name="Basu A."/>
            <person name="Baxendale J."/>
            <person name="Bayraktaroglu L."/>
            <person name="Beasley E.M."/>
            <person name="Beeson K.Y."/>
            <person name="Benos P.V."/>
            <person name="Berman B.P."/>
            <person name="Bhandari D."/>
            <person name="Bolshakov S."/>
            <person name="Borkova D."/>
            <person name="Botchan M.R."/>
            <person name="Bouck J."/>
            <person name="Brokstein P."/>
            <person name="Brottier P."/>
            <person name="Burtis K.C."/>
            <person name="Busam D.A."/>
            <person name="Butler H."/>
            <person name="Cadieu E."/>
            <person name="Center A."/>
            <person name="Chandra I."/>
            <person name="Cherry J.M."/>
            <person name="Cawley S."/>
            <person name="Dahlke C."/>
            <person name="Davenport L.B."/>
            <person name="Davies P."/>
            <person name="de Pablos B."/>
            <person name="Delcher A."/>
            <person name="Deng Z."/>
            <person name="Mays A.D."/>
            <person name="Dew I."/>
            <person name="Dietz S.M."/>
            <person name="Dodson K."/>
            <person name="Doup L.E."/>
            <person name="Downes M."/>
            <person name="Dugan-Rocha S."/>
            <person name="Dunkov B.C."/>
            <person name="Dunn P."/>
            <person name="Durbin K.J."/>
            <person name="Evangelista C.C."/>
            <person name="Ferraz C."/>
            <person name="Ferriera S."/>
            <person name="Fleischmann W."/>
            <person name="Fosler C."/>
            <person name="Gabrielian A.E."/>
            <person name="Garg N.S."/>
            <person name="Gelbart W.M."/>
            <person name="Glasser K."/>
            <person name="Glodek A."/>
            <person name="Gong F."/>
            <person name="Gorrell J.H."/>
            <person name="Gu Z."/>
            <person name="Guan P."/>
            <person name="Harris M."/>
            <person name="Harris N.L."/>
            <person name="Harvey D.A."/>
            <person name="Heiman T.J."/>
            <person name="Hernandez J.R."/>
            <person name="Houck J."/>
            <person name="Hostin D."/>
            <person name="Houston K.A."/>
            <person name="Howland T.J."/>
            <person name="Wei M.-H."/>
            <person name="Ibegwam C."/>
            <person name="Jalali M."/>
            <person name="Kalush F."/>
            <person name="Karpen G.H."/>
            <person name="Ke Z."/>
            <person name="Kennison J.A."/>
            <person name="Ketchum K.A."/>
            <person name="Kimmel B.E."/>
            <person name="Kodira C.D."/>
            <person name="Kraft C.L."/>
            <person name="Kravitz S."/>
            <person name="Kulp D."/>
            <person name="Lai Z."/>
            <person name="Lasko P."/>
            <person name="Lei Y."/>
            <person name="Levitsky A.A."/>
            <person name="Li J.H."/>
            <person name="Li Z."/>
            <person name="Liang Y."/>
            <person name="Lin X."/>
            <person name="Liu X."/>
            <person name="Mattei B."/>
            <person name="McIntosh T.C."/>
            <person name="McLeod M.P."/>
            <person name="McPherson D."/>
            <person name="Merkulov G."/>
            <person name="Milshina N.V."/>
            <person name="Mobarry C."/>
            <person name="Morris J."/>
            <person name="Moshrefi A."/>
            <person name="Mount S.M."/>
            <person name="Moy M."/>
            <person name="Murphy B."/>
            <person name="Murphy L."/>
            <person name="Muzny D.M."/>
            <person name="Nelson D.L."/>
            <person name="Nelson D.R."/>
            <person name="Nelson K.A."/>
            <person name="Nixon K."/>
            <person name="Nusskern D.R."/>
            <person name="Pacleb J.M."/>
            <person name="Palazzolo M."/>
            <person name="Pittman G.S."/>
            <person name="Pan S."/>
            <person name="Pollard J."/>
            <person name="Puri V."/>
            <person name="Reese M.G."/>
            <person name="Reinert K."/>
            <person name="Remington K."/>
            <person name="Saunders R.D.C."/>
            <person name="Scheeler F."/>
            <person name="Shen H."/>
            <person name="Shue B.C."/>
            <person name="Siden-Kiamos I."/>
            <person name="Simpson M."/>
            <person name="Skupski M.P."/>
            <person name="Smith T.J."/>
            <person name="Spier E."/>
            <person name="Spradling A.C."/>
            <person name="Stapleton M."/>
            <person name="Strong R."/>
            <person name="Sun E."/>
            <person name="Svirskas R."/>
            <person name="Tector C."/>
            <person name="Turner R."/>
            <person name="Venter E."/>
            <person name="Wang A.H."/>
            <person name="Wang X."/>
            <person name="Wang Z.-Y."/>
            <person name="Wassarman D.A."/>
            <person name="Weinstock G.M."/>
            <person name="Weissenbach J."/>
            <person name="Williams S.M."/>
            <person name="Woodage T."/>
            <person name="Worley K.C."/>
            <person name="Wu D."/>
            <person name="Yang S."/>
            <person name="Yao Q.A."/>
            <person name="Ye J."/>
            <person name="Yeh R.-F."/>
            <person name="Zaveri J.S."/>
            <person name="Zhan M."/>
            <person name="Zhang G."/>
            <person name="Zhao Q."/>
            <person name="Zheng L."/>
            <person name="Zheng X.H."/>
            <person name="Zhong F.N."/>
            <person name="Zhong W."/>
            <person name="Zhou X."/>
            <person name="Zhu S.C."/>
            <person name="Zhu X."/>
            <person name="Smith H.O."/>
            <person name="Gibbs R.A."/>
            <person name="Myers E.W."/>
            <person name="Rubin G.M."/>
            <person name="Venter J.C."/>
        </authorList>
    </citation>
    <scope>NUCLEOTIDE SEQUENCE [LARGE SCALE GENOMIC DNA]</scope>
    <source>
        <strain evidence="22">Berkeley</strain>
    </source>
</reference>
<reference evidence="22" key="2">
    <citation type="journal article" date="2002" name="Genome Biol.">
        <title>Annotation of the Drosophila melanogaster euchromatic genome: a systematic review.</title>
        <authorList>
            <person name="Misra S."/>
            <person name="Crosby M.A."/>
            <person name="Mungall C.J."/>
            <person name="Matthews B.B."/>
            <person name="Campbell K.S."/>
            <person name="Hradecky P."/>
            <person name="Huang Y."/>
            <person name="Kaminker J.S."/>
            <person name="Millburn G.H."/>
            <person name="Prochnik S.E."/>
            <person name="Smith C.D."/>
            <person name="Tupy J.L."/>
            <person name="Whitfield E.J."/>
            <person name="Bayraktaroglu L."/>
            <person name="Berman B.P."/>
            <person name="Bettencourt B.R."/>
            <person name="Celniker S.E."/>
            <person name="de Grey A.D.N.J."/>
            <person name="Drysdale R.A."/>
            <person name="Harris N.L."/>
            <person name="Richter J."/>
            <person name="Russo S."/>
            <person name="Schroeder A.J."/>
            <person name="Shu S.Q."/>
            <person name="Stapleton M."/>
            <person name="Yamada C."/>
            <person name="Ashburner M."/>
            <person name="Gelbart W.M."/>
            <person name="Rubin G.M."/>
            <person name="Lewis S.E."/>
        </authorList>
    </citation>
    <scope>GENOME REANNOTATION</scope>
    <source>
        <strain evidence="22">Berkeley</strain>
    </source>
</reference>
<reference evidence="19 20" key="3">
    <citation type="submission" date="2003-12" db="EMBL/GenBank/DDBJ databases">
        <authorList>
            <person name="Stapleton M."/>
            <person name="Brokstein P."/>
            <person name="Booth B."/>
            <person name="Hong L."/>
            <person name="Agbayani A."/>
            <person name="Carlson J."/>
            <person name="Champe M."/>
            <person name="Chavez C."/>
            <person name="Dorsett V."/>
            <person name="Dresnek D."/>
            <person name="Farfan D."/>
            <person name="Frise E."/>
            <person name="George R."/>
            <person name="Gonzalez M."/>
            <person name="Guarin H."/>
            <person name="Kronmiller B."/>
            <person name="Li P."/>
            <person name="Liao G."/>
            <person name="Miranda A."/>
            <person name="Mungall C.J."/>
            <person name="Nunoo J."/>
            <person name="Pacleb J."/>
            <person name="Paragas V."/>
            <person name="Park S."/>
            <person name="Patel S."/>
            <person name="Phouanenavong S."/>
            <person name="Wan K."/>
            <person name="Yu C."/>
            <person name="Lewis S.E."/>
            <person name="Rubin G.M."/>
            <person name="Celniker S."/>
        </authorList>
    </citation>
    <scope>NUCLEOTIDE SEQUENCE [MRNA] (ISOFORM C)</scope>
    <scope>NUCLEOTIDE SEQUENCE [MRNA] OF 770-1960 (ISOFORM A)</scope>
    <source>
        <strain evidence="19 20">Berkeley</strain>
        <tissue evidence="19 20">Embryo</tissue>
    </source>
</reference>
<reference evidence="18" key="4">
    <citation type="journal article" date="2010" name="Cell">
        <title>Nucleoporins directly stimulate expression of developmental and cell-cycle genes inside the nucleoplasm.</title>
        <authorList>
            <person name="Kalverda B."/>
            <person name="Pickersgill H."/>
            <person name="Shloma V.V."/>
            <person name="Fornerod M."/>
        </authorList>
    </citation>
    <scope>FUNCTION</scope>
    <scope>SUBCELLULAR LOCATION</scope>
</reference>
<reference evidence="18" key="5">
    <citation type="journal article" date="2010" name="Cell">
        <title>Chromatin-bound nuclear pore components regulate gene expression in higher eukaryotes.</title>
        <authorList>
            <person name="Capelson M."/>
            <person name="Liang Y."/>
            <person name="Schulte R."/>
            <person name="Mair W."/>
            <person name="Wagner U."/>
            <person name="Hetzer M.W."/>
        </authorList>
    </citation>
    <scope>FUNCTION</scope>
    <scope>SUBCELLULAR LOCATION</scope>
    <scope>DEVELOPMENTAL STAGE</scope>
    <scope>DISRUPTION PHENOTYPE</scope>
</reference>
<reference evidence="18" key="6">
    <citation type="journal article" date="2010" name="Mol. Cell. Biol.">
        <title>Specific nucleoporin requirement for Smad nuclear translocation.</title>
        <authorList>
            <person name="Chen X."/>
            <person name="Xu L."/>
        </authorList>
    </citation>
    <scope>FUNCTION</scope>
</reference>
<reference evidence="18" key="7">
    <citation type="journal article" date="2011" name="Nat. Neurosci.">
        <title>Drosophila Rae1 controls the abundance of the ubiquitin ligase Highwire in post-mitotic neurons.</title>
        <authorList>
            <person name="Tian X."/>
            <person name="Li J."/>
            <person name="Valakh V."/>
            <person name="DiAntonio A."/>
            <person name="Wu C."/>
        </authorList>
    </citation>
    <scope>IDENTIFICATION BY MASS SPECTROMETRY</scope>
    <scope>INTERACTION WITH RAE1</scope>
    <scope>TISSUE SPECIFICITY</scope>
</reference>
<reference evidence="18" key="8">
    <citation type="journal article" date="2011" name="PLoS ONE">
        <title>Nucleoporin98-96 function is required for transit amplification divisions in the germ line of Drosophila melanogaster.</title>
        <authorList>
            <person name="Parrott B.B."/>
            <person name="Chiang Y."/>
            <person name="Hudson A."/>
            <person name="Sarkar A."/>
            <person name="Guichet A."/>
            <person name="Schulz C."/>
        </authorList>
    </citation>
    <scope>FUNCTION</scope>
    <scope>DISRUPTION PHENOTYPE</scope>
</reference>
<reference evidence="18" key="9">
    <citation type="journal article" date="2014" name="Cell Rep.">
        <title>Nucleoporin Nup98 associates with Trx/MLL and NSL histone-modifying complexes and regulates Hox gene expression.</title>
        <authorList>
            <person name="Pascual-Garcia P."/>
            <person name="Jeong J."/>
            <person name="Capelson M."/>
        </authorList>
    </citation>
    <scope>FUNCTION</scope>
    <scope>INTERACTION WITH TRX; WDS; MBD-R2; PZG AND CHRO</scope>
    <scope>SUBCELLULAR LOCATION</scope>
    <scope>DISRUPTION PHENOTYPE</scope>
</reference>
<reference evidence="18" key="10">
    <citation type="journal article" date="2014" name="Elife">
        <title>Pvr expression regulators in equilibrium signal control and maintenance of Drosophila blood progenitors.</title>
        <authorList>
            <person name="Mondal B.C."/>
            <person name="Shim J."/>
            <person name="Evans C.J."/>
            <person name="Banerjee U."/>
        </authorList>
    </citation>
    <scope>FUNCTION</scope>
</reference>
<reference evidence="18" key="11">
    <citation type="journal article" date="2014" name="Proc. Natl. Acad. Sci. U.S.A.">
        <title>Nup98 promotes antiviral gene expression to restrict RNA viral infection in Drosophila.</title>
        <authorList>
            <person name="Panda D."/>
            <person name="Pascual-Garcia P."/>
            <person name="Dunagin M."/>
            <person name="Tudor M."/>
            <person name="Hopkins K.C."/>
            <person name="Xu J."/>
            <person name="Gold B."/>
            <person name="Raj A."/>
            <person name="Capelson M."/>
            <person name="Cherry S."/>
        </authorList>
    </citation>
    <scope>FUNCTION</scope>
    <scope>SUBCELLULAR LOCATION</scope>
    <scope>INDUCTION</scope>
    <scope>DISRUPTION PHENOTYPE</scope>
</reference>
<reference evidence="18" key="12">
    <citation type="journal article" date="2015" name="MBio">
        <title>The transcription factor FoxK participates with Nup98 to regulate antiviral gene expression.</title>
        <authorList>
            <person name="Panda D."/>
            <person name="Gold B."/>
            <person name="Tartell M.A."/>
            <person name="Rausch K."/>
            <person name="Casas-Tinto S."/>
            <person name="Cherry S."/>
        </authorList>
    </citation>
    <scope>FUNCTION</scope>
</reference>
<reference evidence="18" key="13">
    <citation type="journal article" date="2017" name="Biochim. Biophys. Acta">
        <title>The actin binding cytoskeletal protein Moesin is involved in nuclear mRNA export.</title>
        <authorList>
            <person name="Kristo I."/>
            <person name="Bajusz C."/>
            <person name="Borsos B.N."/>
            <person name="Pankotai T."/>
            <person name="Dopie J."/>
            <person name="Jankovics F."/>
            <person name="Vartiainen M.K."/>
            <person name="Erdelyi M."/>
            <person name="Vilmos P."/>
        </authorList>
    </citation>
    <scope>FUNCTION</scope>
    <scope>INTERACTION WITH RAE1</scope>
</reference>
<reference evidence="18" key="14">
    <citation type="journal article" date="2017" name="Mol. Cell">
        <title>Metazoan nuclear pores provide a scaffold for poised genes and mediate induced enhancer-promoter contacts.</title>
        <authorList>
            <person name="Pascual-Garcia P."/>
            <person name="Debo B."/>
            <person name="Aleman J.R."/>
            <person name="Talamas J.A."/>
            <person name="Lan Y."/>
            <person name="Nguyen N.H."/>
            <person name="Won K.J."/>
            <person name="Capelson M."/>
        </authorList>
    </citation>
    <scope>FUNCTION</scope>
    <scope>INTERACTION WITH MGTOR; ECR; CP190; TRL; SU(HW) AND CTCF</scope>
    <scope>SUBCELLULAR LOCATION</scope>
    <scope>DEVELOPMENTAL STAGE</scope>
</reference>
<sequence length="1960" mass="210139">MFGGAKPSFGATPAATSFGGFSGTTTTTPFGQSAFGKPAAPAFGNTSTFAAQPAQQSLFGAAATPAQPAGGLFGANTSTGFGSTATAQPTAFGAFSQPQQTSNIFGSTQTAASTSLFGQSTLPAFGAAKPTMTAFGQTAAAQPTGSLFGQPAAATSTTGFGGFGTSAPTTTNVFGSGTASAFAQPQATAVGASGVNTGTAVAKYQPTIGTDTLMKSGQANSVNTKQHCITAMKEFEGKSLEELRLEDYMCGRKGPQAGNAPGAFGFGAQVTQPAQPASGGLFGSTAQPSTGLFGQTVTENKSMFGTTAFGQQPATNNAFGAATQQNNFLQKPFGATTTTPFAAPAADASNPFGAKPAFGQGGSLFGQAPATSAAPAFGQTNTGFGGFGTTAGATQQSTLFGATPAADPNKSAFGLGTAASAATTGFGFGAPATSTAGGGLFGNKPATSFAAPTFGATSTASTPFSNFGLNTSTAATGGGLFNSGLNKPATSGFGGFGATSAAPLNFNAGNTGGSLFGNTAKPGGGLFGGGTTTLGGTGAAPTGGLFGGGTTSFGGVGGSLGGGGFGMGTNNSLTGGIMGAQPTLGIMTPSHQPIHQQILARVTSPYGDSPIFKDLKLSSEADATRATNPAAQQAVLDLTSNQYKISTSNNPAPMKVKALGSTLNRKSLFDGLEEFDASVEGFNLKPSAKRLVIKPKVKSVEGGNPSSSIGSAPNTPQSRPKGATPNKERESFSGAIPSEPLPPAGNSPGATNGRESQDNGRRESWLHPNNLEKVRQHNIQTGMDQGSPHNSTLNELVPRKPLDTYRPSSTVRLSVSTIPENPFEDQSSTIARRETFTSQQANESVLSNRSNEAEDSAANQSRLAIEAAAAEAADDESHPTGIVLRRVGYYTIPSLDDLRSYLAEDGSCVVPNFTVGREGYGNVFFGKEMDVAGLNLDEIVHFRNKEIIIYPDDENKPPIGQGLNRDAQVTLDQVWPLDKTKHEAIKDPQRLLEMDWEGKLRRVCDKNDTRFIEYRPETGSWVFRVKHFSKYGLGDSDEEDELPTDPKKAKIATLEAQQRANAEKMTLNSLRQAQKISEDAARNLDPKALVAGVASGFRPMDDTAEFLLMDKTQFFQAGGNSDFSMFDPPRQRPTITSPTAVLAQEMVGNEAHKMQLMKSSFFVEDNAPEDEPMETTGRLLRHRKFFNVEPLVWKDGASESSSQYDFEHPSPALPISSSVSEASLMCDAHYEETSSMATGSIVAAVKETKFEMPVTKAFKFVCKPKVAPIKLRATTVPLPRSIAYEMRDNWIADLGFYKGRSFKLSFGPQNSLVLPSTYNNMQNLKEFTGPSLPVSMVFAPRSATDLSPSVMQLVEFNMVKGNEGFRESIIPHLEVQLNDCLSVNVEGSECPCIHPDSGTKLVSKHFSESLKQRNAGLKEDYSVSVWSLLFALWGDHDELVDLEKNSHYMVMCRRNLLSEWLENTLLGKDLLSKKVSTHSYLEHMLDLLSCHRVNEACELAFSYDDANLALVLSQLSSGAVFRLLMEEQLFAWQQSKSDKYIDLERLKMYMLAAGAPMMQSSHGAINLLENKNWLTALALQLWYFTAPTSSITDALNAYNDAFQAEECYAEPPKPSYRDAPTDTKKPVYDLRYHLLQLHSKRMHSLEETLNPITHTADAMDFRLSWLLLQTLRALGYRHCSPLTEARLSVDFASQLENEGLWQWGIFVLLHIKQQTQRERAVQQMLQRNVSVSAKVALYAEERFIVEELGIPMSWVDYAKAVKAGASGKHHLQAKYLLKAKHFATAHDVIFQHIAPDAIINGKMKYLHSLLIQFEDTEGSSIRVPNWANQGQIFLDFIDISAKFKQIRSVTNIADINARWENLKPQLSELCSRISLLPCPTSKHRLCQSEISQSLSCLVHGMCIVCPEMESSTVLKVALERLPLPQEFASKELRIWLEELLDKIQNEPPFSERQQPTMMEI</sequence>
<comment type="function">
    <text evidence="6 8 9 10 12 14">Part of the nuclear pore complex (NPC) (PubMed:25197089). Required for MAD import as part of the Nup107-160 complex and required for nuclear export of Moe probably via its association with Rae1 (PubMed:20547758, PubMed:28554770). Plays a role in nuclear mRNA export (PubMed:28554770). Promotes cell antiviral response by up-regulating FoxK-dependent antiviral gene transcription (PubMed:25197089, PubMed:25852164). In germline stem cells, involved in their maintenance and division together with the TGF-Beta and EGFR signaling pathways (PubMed:21949861). In larval lymph glands, has a role in the maintenance of hematopoiesis by regulating Pvr expression (PubMed:25201876).</text>
</comment>
<comment type="function">
    <molecule>Nuclear pore complex protein Nup98</molecule>
    <text evidence="4 5 11 13">Part of the nuclear pore complex (NPC) (PubMed:25310983). In the nucleoplasm, binds to transcriptionally active chromatin with a preference for regulatory regions; co-localizes with RNA polymerase II in a RNA-independent manner and before transition into transcription elongation (PubMed:20144760, PubMed:20144761, PubMed:28366641). Plays a role in the transcriptional memory process by stabilizing enhancer-promoter loops and by mediating anchoring of chromatin to the nuclear pore complex region (PubMed:28366641). During larval development, interacts with trx and MBD-R2 and regulates transcription of developmental genes including ecdysone-responsive genes such as Eip74 and E23 (PubMed:20144761, PubMed:25310983, PubMed:28366641).</text>
</comment>
<comment type="function">
    <molecule>Nuclear pore complex protein Nup96</molecule>
    <text evidence="11">Part of the nuclear pore complex (NPC).</text>
</comment>
<comment type="subunit">
    <text evidence="7 11 13 14">Part of the nuclear pore complex (NPC) (PubMed:25310983). Interacts with Rae1 (PubMed:21874015, PubMed:28554770). Nuclear pore complex protein Nup98: Interacts with pzg and Chro (PubMed:25310983). Interacts with MBD-R2; the interaction allows Nup98 recruitment to chromatin (PubMed:25310983). Interacts with Trx (PubMed:25310983). Interacts with Wds (PubMed:25310983). Interacts with Mgtor and Cp190 (PubMed:28366641). Upon ecdysone stimulation, interacts with EcR, CTCF, su(Hw) and Trl (PubMed:28366641).</text>
</comment>
<comment type="subcellular location">
    <subcellularLocation>
        <location evidence="5">Chromosome</location>
    </subcellularLocation>
    <subcellularLocation>
        <location evidence="4">Nucleus</location>
        <location evidence="4">Nucleoplasm</location>
    </subcellularLocation>
    <subcellularLocation>
        <location evidence="5 9">Nucleus membrane</location>
        <topology evidence="1">Peripheral membrane protein</topology>
        <orientation evidence="1">Nucleoplasmic side</orientation>
    </subcellularLocation>
    <subcellularLocation>
        <location evidence="11">Nucleus</location>
        <location evidence="11">Nuclear pore complex</location>
    </subcellularLocation>
    <subcellularLocation>
        <location evidence="13">Nucleus</location>
    </subcellularLocation>
    <text evidence="4 5 13">Associates with transcriptionally active chromatin.</text>
</comment>
<comment type="subcellular location">
    <molecule>Nuclear pore complex protein Nup98</molecule>
    <subcellularLocation>
        <location evidence="11">Nucleus</location>
        <location evidence="11">Nuclear pore complex</location>
    </subcellularLocation>
</comment>
<comment type="subcellular location">
    <molecule>Nuclear pore complex protein Nup96</molecule>
    <subcellularLocation>
        <location evidence="11">Nucleus</location>
        <location evidence="11">Nuclear pore complex</location>
    </subcellularLocation>
</comment>
<comment type="alternative products">
    <event type="alternative splicing"/>
    <isoform>
        <id>Q9VCH5-1</id>
        <name evidence="21">A</name>
        <sequence type="displayed"/>
    </isoform>
    <isoform>
        <id>Q9VCH5-2</id>
        <name evidence="21">C</name>
        <sequence type="described" ref="VSP_059347 VSP_059348"/>
    </isoform>
</comment>
<comment type="tissue specificity">
    <text evidence="7">Expressed in brain.</text>
</comment>
<comment type="developmental stage">
    <text evidence="5 13">Expressed during larval development (PubMed:20144761). Expressed in brain in third instar larvae (at protein level) (PubMed:28366641).</text>
</comment>
<comment type="induction">
    <text evidence="9">Up-regulated upon Drosophila C virus (DCV) or Sindbis virus (SINV) infection.</text>
</comment>
<comment type="domain">
    <text evidence="18">Contains FG repeats. FG repeats are interaction sites for karyopherins (importins, exportins) and form probably an affinity gradient, guiding the transport proteins unidirectionally with their cargo through the NPC. FG repeat regions are highly flexible and lack ordered secondary structure. The overall conservation of FG repeats regarding exact sequence, spacing, and repeat unit length is limited.</text>
</comment>
<comment type="PTM">
    <text evidence="1">Isoform A and isoform C are autoproteolytically cleaved to yield Nup98 and Nup96 or Nup98 only, respectively.</text>
</comment>
<comment type="disruption phenotype">
    <text evidence="5 8 9 11">Defective germline population maintenance and differentiation when both Nup98 and Nup96 are disrupted (PubMed:21949861). RNAi-mediated knockdown in the larval salivary glands results in reduced transcription of developmental genes Eip74EF and Eip75B and compromised transcriptional recovery after heat shock (PubMed:20144761). RNAi-mediated knockdown in the larva results in reduced expression of Hox genes such as Ubx and Antp (PubMed:25310983). RNA-mediated knockdown in the adult fly increases viral replication of Sindbis virus (SINV), vesicular stomatitis virus (VSV) and Drosophila C virus (DCV) (PubMed:25197089).</text>
</comment>
<comment type="similarity">
    <text evidence="18">Belongs to the nucleoporin GLFG family.</text>
</comment>
<organism evidence="22">
    <name type="scientific">Drosophila melanogaster</name>
    <name type="common">Fruit fly</name>
    <dbReference type="NCBI Taxonomy" id="7227"/>
    <lineage>
        <taxon>Eukaryota</taxon>
        <taxon>Metazoa</taxon>
        <taxon>Ecdysozoa</taxon>
        <taxon>Arthropoda</taxon>
        <taxon>Hexapoda</taxon>
        <taxon>Insecta</taxon>
        <taxon>Pterygota</taxon>
        <taxon>Neoptera</taxon>
        <taxon>Endopterygota</taxon>
        <taxon>Diptera</taxon>
        <taxon>Brachycera</taxon>
        <taxon>Muscomorpha</taxon>
        <taxon>Ephydroidea</taxon>
        <taxon>Drosophilidae</taxon>
        <taxon>Drosophila</taxon>
        <taxon>Sophophora</taxon>
    </lineage>
</organism>
<dbReference type="EC" id="3.4.21.-" evidence="1"/>
<dbReference type="EMBL" id="AE014297">
    <property type="protein sequence ID" value="AAF56190.3"/>
    <property type="molecule type" value="Genomic_DNA"/>
</dbReference>
<dbReference type="EMBL" id="AE014297">
    <property type="protein sequence ID" value="AGB96265.1"/>
    <property type="molecule type" value="Genomic_DNA"/>
</dbReference>
<dbReference type="EMBL" id="AE014297">
    <property type="protein sequence ID" value="AFH06584.1"/>
    <property type="molecule type" value="Genomic_DNA"/>
</dbReference>
<dbReference type="EMBL" id="BT056313">
    <property type="protein sequence ID" value="ACL68760.1"/>
    <property type="molecule type" value="mRNA"/>
</dbReference>
<dbReference type="EMBL" id="BT011076">
    <property type="protein sequence ID" value="AAR82742.1"/>
    <property type="molecule type" value="mRNA"/>
</dbReference>
<dbReference type="RefSeq" id="NP_001247266.1">
    <molecule id="Q9VCH5-2"/>
    <property type="nucleotide sequence ID" value="NM_001260337.1"/>
</dbReference>
<dbReference type="RefSeq" id="NP_001262885.1">
    <molecule id="Q9VCH5-1"/>
    <property type="nucleotide sequence ID" value="NM_001275956.1"/>
</dbReference>
<dbReference type="RefSeq" id="NP_651187.2">
    <molecule id="Q9VCH5-1"/>
    <property type="nucleotide sequence ID" value="NM_142930.3"/>
</dbReference>
<dbReference type="SMR" id="Q9VCH5"/>
<dbReference type="ComplexPortal" id="CPX-2568">
    <property type="entry name" value="Nuclear pore complex"/>
</dbReference>
<dbReference type="FunCoup" id="Q9VCH5">
    <property type="interactions" value="2583"/>
</dbReference>
<dbReference type="IntAct" id="Q9VCH5">
    <property type="interactions" value="7"/>
</dbReference>
<dbReference type="MINT" id="Q9VCH5"/>
<dbReference type="STRING" id="7227.FBpp0083851"/>
<dbReference type="MEROPS" id="S59.A04"/>
<dbReference type="GlyGen" id="Q9VCH5">
    <property type="glycosylation" value="3 sites"/>
</dbReference>
<dbReference type="PaxDb" id="7227-FBpp0083851"/>
<dbReference type="DNASU" id="42816"/>
<dbReference type="EnsemblMetazoa" id="FBtr0084460">
    <molecule id="Q9VCH5-1"/>
    <property type="protein sequence ID" value="FBpp0083851"/>
    <property type="gene ID" value="FBgn0039120"/>
</dbReference>
<dbReference type="EnsemblMetazoa" id="FBtr0304567">
    <molecule id="Q9VCH5-2"/>
    <property type="protein sequence ID" value="FBpp0293109"/>
    <property type="gene ID" value="FBgn0039120"/>
</dbReference>
<dbReference type="EnsemblMetazoa" id="FBtr0334894">
    <molecule id="Q9VCH5-1"/>
    <property type="protein sequence ID" value="FBpp0306915"/>
    <property type="gene ID" value="FBgn0039120"/>
</dbReference>
<dbReference type="GeneID" id="42816"/>
<dbReference type="KEGG" id="dme:Dmel_CG10198"/>
<dbReference type="UCSC" id="CG10198-RA">
    <molecule id="Q9VCH5-1"/>
    <property type="organism name" value="d. melanogaster"/>
</dbReference>
<dbReference type="AGR" id="FB:FBgn0039120"/>
<dbReference type="CTD" id="42816"/>
<dbReference type="FlyBase" id="FBgn0039120">
    <property type="gene designation" value="Nup98-96"/>
</dbReference>
<dbReference type="VEuPathDB" id="VectorBase:FBgn0039120"/>
<dbReference type="eggNOG" id="KOG0845">
    <property type="taxonomic scope" value="Eukaryota"/>
</dbReference>
<dbReference type="GeneTree" id="ENSGT00550000074799"/>
<dbReference type="InParanoid" id="Q9VCH5"/>
<dbReference type="OMA" id="PMGKGLN"/>
<dbReference type="OrthoDB" id="3797628at2759"/>
<dbReference type="PhylomeDB" id="Q9VCH5"/>
<dbReference type="Reactome" id="R-DME-159227">
    <property type="pathway name" value="Transport of the SLBP independent Mature mRNA"/>
</dbReference>
<dbReference type="Reactome" id="R-DME-159230">
    <property type="pathway name" value="Transport of the SLBP Dependant Mature mRNA"/>
</dbReference>
<dbReference type="Reactome" id="R-DME-159231">
    <property type="pathway name" value="Transport of Mature mRNA Derived from an Intronless Transcript"/>
</dbReference>
<dbReference type="Reactome" id="R-DME-159236">
    <property type="pathway name" value="Transport of Mature mRNA derived from an Intron-Containing Transcript"/>
</dbReference>
<dbReference type="Reactome" id="R-DME-3108214">
    <property type="pathway name" value="SUMOylation of DNA damage response and repair proteins"/>
</dbReference>
<dbReference type="Reactome" id="R-DME-3301854">
    <property type="pathway name" value="Nuclear Pore Complex (NPC) Disassembly"/>
</dbReference>
<dbReference type="Reactome" id="R-DME-4085377">
    <property type="pathway name" value="SUMOylation of SUMOylation proteins"/>
</dbReference>
<dbReference type="Reactome" id="R-DME-4551638">
    <property type="pathway name" value="SUMOylation of chromatin organization proteins"/>
</dbReference>
<dbReference type="Reactome" id="R-DME-4615885">
    <property type="pathway name" value="SUMOylation of DNA replication proteins"/>
</dbReference>
<dbReference type="Reactome" id="R-DME-5578749">
    <property type="pathway name" value="Transcriptional regulation by small RNAs"/>
</dbReference>
<dbReference type="Reactome" id="R-DME-9615933">
    <property type="pathway name" value="Postmitotic nuclear pore complex (NPC) reformation"/>
</dbReference>
<dbReference type="SignaLink" id="Q9VCH5"/>
<dbReference type="BioGRID-ORCS" id="42816">
    <property type="hits" value="1 hit in 1 CRISPR screen"/>
</dbReference>
<dbReference type="CD-CODE" id="99EB68D3">
    <property type="entry name" value="Nuclear pore complex"/>
</dbReference>
<dbReference type="GenomeRNAi" id="42816"/>
<dbReference type="PRO" id="PR:Q9VCH5"/>
<dbReference type="Proteomes" id="UP000000803">
    <property type="component" value="Chromosome 3R"/>
</dbReference>
<dbReference type="Bgee" id="FBgn0039120">
    <property type="expression patterns" value="Expressed in hemocyte (sensu Nematoda and Protostomia) in arthropod fat body and 129 other cell types or tissues"/>
</dbReference>
<dbReference type="ExpressionAtlas" id="Q9VCH5">
    <property type="expression patterns" value="baseline and differential"/>
</dbReference>
<dbReference type="GO" id="GO:0000785">
    <property type="term" value="C:chromatin"/>
    <property type="evidence" value="ECO:0000314"/>
    <property type="project" value="UniProtKB"/>
</dbReference>
<dbReference type="GO" id="GO:0005737">
    <property type="term" value="C:cytoplasm"/>
    <property type="evidence" value="ECO:0000314"/>
    <property type="project" value="UniProtKB"/>
</dbReference>
<dbReference type="GO" id="GO:0031965">
    <property type="term" value="C:nuclear membrane"/>
    <property type="evidence" value="ECO:0007669"/>
    <property type="project" value="UniProtKB-SubCell"/>
</dbReference>
<dbReference type="GO" id="GO:0005643">
    <property type="term" value="C:nuclear pore"/>
    <property type="evidence" value="ECO:0000314"/>
    <property type="project" value="UniProtKB"/>
</dbReference>
<dbReference type="GO" id="GO:0044613">
    <property type="term" value="C:nuclear pore central transport channel"/>
    <property type="evidence" value="ECO:0000250"/>
    <property type="project" value="FlyBase"/>
</dbReference>
<dbReference type="GO" id="GO:0044614">
    <property type="term" value="C:nuclear pore cytoplasmic filaments"/>
    <property type="evidence" value="ECO:0000318"/>
    <property type="project" value="GO_Central"/>
</dbReference>
<dbReference type="GO" id="GO:0005654">
    <property type="term" value="C:nucleoplasm"/>
    <property type="evidence" value="ECO:0007669"/>
    <property type="project" value="UniProtKB-SubCell"/>
</dbReference>
<dbReference type="GO" id="GO:0005634">
    <property type="term" value="C:nucleus"/>
    <property type="evidence" value="ECO:0000314"/>
    <property type="project" value="UniProtKB"/>
</dbReference>
<dbReference type="GO" id="GO:0005700">
    <property type="term" value="C:polytene chromosome"/>
    <property type="evidence" value="ECO:0000314"/>
    <property type="project" value="UniProtKB"/>
</dbReference>
<dbReference type="GO" id="GO:0005704">
    <property type="term" value="C:polytene chromosome band"/>
    <property type="evidence" value="ECO:0000314"/>
    <property type="project" value="UniProtKB"/>
</dbReference>
<dbReference type="GO" id="GO:0005703">
    <property type="term" value="C:polytene chromosome puff"/>
    <property type="evidence" value="ECO:0000314"/>
    <property type="project" value="UniProtKB"/>
</dbReference>
<dbReference type="GO" id="GO:0031490">
    <property type="term" value="F:chromatin DNA binding"/>
    <property type="evidence" value="ECO:0000314"/>
    <property type="project" value="UniProtKB"/>
</dbReference>
<dbReference type="GO" id="GO:0008139">
    <property type="term" value="F:nuclear localization sequence binding"/>
    <property type="evidence" value="ECO:0000318"/>
    <property type="project" value="GO_Central"/>
</dbReference>
<dbReference type="GO" id="GO:0140585">
    <property type="term" value="F:promoter-enhancer loop anchoring activity"/>
    <property type="evidence" value="ECO:0000315"/>
    <property type="project" value="GO_Central"/>
</dbReference>
<dbReference type="GO" id="GO:1990841">
    <property type="term" value="F:promoter-specific chromatin binding"/>
    <property type="evidence" value="ECO:0000314"/>
    <property type="project" value="UniProtKB"/>
</dbReference>
<dbReference type="GO" id="GO:0003723">
    <property type="term" value="F:RNA binding"/>
    <property type="evidence" value="ECO:0000318"/>
    <property type="project" value="GO_Central"/>
</dbReference>
<dbReference type="GO" id="GO:0017171">
    <property type="term" value="F:serine hydrolase activity"/>
    <property type="evidence" value="ECO:0007005"/>
    <property type="project" value="FlyBase"/>
</dbReference>
<dbReference type="GO" id="GO:0008236">
    <property type="term" value="F:serine-type peptidase activity"/>
    <property type="evidence" value="ECO:0007669"/>
    <property type="project" value="UniProtKB-KW"/>
</dbReference>
<dbReference type="GO" id="GO:0017056">
    <property type="term" value="F:structural constituent of nuclear pore"/>
    <property type="evidence" value="ECO:0000250"/>
    <property type="project" value="FlyBase"/>
</dbReference>
<dbReference type="GO" id="GO:0071390">
    <property type="term" value="P:cellular response to ecdysone"/>
    <property type="evidence" value="ECO:0000314"/>
    <property type="project" value="UniProtKB"/>
</dbReference>
<dbReference type="GO" id="GO:0034605">
    <property type="term" value="P:cellular response to heat"/>
    <property type="evidence" value="ECO:0000315"/>
    <property type="project" value="UniProtKB"/>
</dbReference>
<dbReference type="GO" id="GO:0030718">
    <property type="term" value="P:germ-line stem cell population maintenance"/>
    <property type="evidence" value="ECO:0000315"/>
    <property type="project" value="FlyBase"/>
</dbReference>
<dbReference type="GO" id="GO:0035080">
    <property type="term" value="P:heat shock-mediated polytene chromosome puffing"/>
    <property type="evidence" value="ECO:0000314"/>
    <property type="project" value="UniProtKB"/>
</dbReference>
<dbReference type="GO" id="GO:0035167">
    <property type="term" value="P:larval lymph gland hemopoiesis"/>
    <property type="evidence" value="ECO:0000315"/>
    <property type="project" value="FlyBase"/>
</dbReference>
<dbReference type="GO" id="GO:0036098">
    <property type="term" value="P:male germ-line stem cell population maintenance"/>
    <property type="evidence" value="ECO:0000316"/>
    <property type="project" value="UniProtKB"/>
</dbReference>
<dbReference type="GO" id="GO:0051028">
    <property type="term" value="P:mRNA transport"/>
    <property type="evidence" value="ECO:0007669"/>
    <property type="project" value="UniProtKB-KW"/>
</dbReference>
<dbReference type="GO" id="GO:0043922">
    <property type="term" value="P:negative regulation by host of viral transcription"/>
    <property type="evidence" value="ECO:0000315"/>
    <property type="project" value="UniProtKB"/>
</dbReference>
<dbReference type="GO" id="GO:0030838">
    <property type="term" value="P:positive regulation of actin filament polymerization"/>
    <property type="evidence" value="ECO:0000315"/>
    <property type="project" value="UniProtKB"/>
</dbReference>
<dbReference type="GO" id="GO:0002230">
    <property type="term" value="P:positive regulation of defense response to virus by host"/>
    <property type="evidence" value="ECO:0000315"/>
    <property type="project" value="UniProtKB"/>
</dbReference>
<dbReference type="GO" id="GO:0010628">
    <property type="term" value="P:positive regulation of gene expression"/>
    <property type="evidence" value="ECO:0000316"/>
    <property type="project" value="FlyBase"/>
</dbReference>
<dbReference type="GO" id="GO:0045944">
    <property type="term" value="P:positive regulation of transcription by RNA polymerase II"/>
    <property type="evidence" value="ECO:0000315"/>
    <property type="project" value="UniProtKB"/>
</dbReference>
<dbReference type="GO" id="GO:0060261">
    <property type="term" value="P:positive regulation of transcription initiation by RNA polymerase II"/>
    <property type="evidence" value="ECO:0000315"/>
    <property type="project" value="UniProtKB"/>
</dbReference>
<dbReference type="GO" id="GO:0000973">
    <property type="term" value="P:post-transcriptional tethering of RNA polymerase II gene DNA at nuclear periphery"/>
    <property type="evidence" value="ECO:0000318"/>
    <property type="project" value="GO_Central"/>
</dbReference>
<dbReference type="GO" id="GO:0006606">
    <property type="term" value="P:protein import into nucleus"/>
    <property type="evidence" value="ECO:0000315"/>
    <property type="project" value="FlyBase"/>
</dbReference>
<dbReference type="GO" id="GO:0006508">
    <property type="term" value="P:proteolysis"/>
    <property type="evidence" value="ECO:0007669"/>
    <property type="project" value="UniProtKB-KW"/>
</dbReference>
<dbReference type="GO" id="GO:0046822">
    <property type="term" value="P:regulation of nucleocytoplasmic transport"/>
    <property type="evidence" value="ECO:0000315"/>
    <property type="project" value="FlyBase"/>
</dbReference>
<dbReference type="GO" id="GO:0035075">
    <property type="term" value="P:response to ecdysone"/>
    <property type="evidence" value="ECO:0000314"/>
    <property type="project" value="UniProtKB"/>
</dbReference>
<dbReference type="GO" id="GO:0006405">
    <property type="term" value="P:RNA export from nucleus"/>
    <property type="evidence" value="ECO:0000315"/>
    <property type="project" value="UniProtKB"/>
</dbReference>
<dbReference type="GO" id="GO:0034398">
    <property type="term" value="P:telomere tethering at nuclear periphery"/>
    <property type="evidence" value="ECO:0000318"/>
    <property type="project" value="GO_Central"/>
</dbReference>
<dbReference type="FunFam" id="1.10.10.2360:FF:000001">
    <property type="entry name" value="Nuclear pore complex protein Nup98-Nup96"/>
    <property type="match status" value="1"/>
</dbReference>
<dbReference type="FunFam" id="3.30.1610.10:FF:000001">
    <property type="entry name" value="Nuclear pore complex protein Nup98-Nup96"/>
    <property type="match status" value="1"/>
</dbReference>
<dbReference type="FunFam" id="1.25.40.690:FF:000004">
    <property type="entry name" value="Nucleoporin 98-96"/>
    <property type="match status" value="1"/>
</dbReference>
<dbReference type="Gene3D" id="1.10.10.2360">
    <property type="match status" value="1"/>
</dbReference>
<dbReference type="Gene3D" id="1.25.40.690">
    <property type="match status" value="1"/>
</dbReference>
<dbReference type="Gene3D" id="3.30.1610.10">
    <property type="entry name" value="Peptidase S59, nucleoporin"/>
    <property type="match status" value="1"/>
</dbReference>
<dbReference type="InterPro" id="IPR025574">
    <property type="entry name" value="Nucleoporin_FG_rpt"/>
</dbReference>
<dbReference type="InterPro" id="IPR037665">
    <property type="entry name" value="Nucleoporin_S59-like"/>
</dbReference>
<dbReference type="InterPro" id="IPR007230">
    <property type="entry name" value="Nup98_auto-Pept-S59_dom"/>
</dbReference>
<dbReference type="InterPro" id="IPR036903">
    <property type="entry name" value="Nup98_auto-Pept-S59_dom_sf"/>
</dbReference>
<dbReference type="InterPro" id="IPR021967">
    <property type="entry name" value="Nup98_C"/>
</dbReference>
<dbReference type="PANTHER" id="PTHR23198:SF6">
    <property type="entry name" value="NUCLEAR PORE COMPLEX PROTEIN NUP98-NUP96"/>
    <property type="match status" value="1"/>
</dbReference>
<dbReference type="PANTHER" id="PTHR23198">
    <property type="entry name" value="NUCLEOPORIN"/>
    <property type="match status" value="1"/>
</dbReference>
<dbReference type="Pfam" id="PF04096">
    <property type="entry name" value="Nucleoporin2"/>
    <property type="match status" value="1"/>
</dbReference>
<dbReference type="Pfam" id="PF13634">
    <property type="entry name" value="Nucleoporin_FG"/>
    <property type="match status" value="5"/>
</dbReference>
<dbReference type="Pfam" id="PF12110">
    <property type="entry name" value="Nup96"/>
    <property type="match status" value="1"/>
</dbReference>
<dbReference type="Pfam" id="PF21240">
    <property type="entry name" value="Nup98_GLEBS"/>
    <property type="match status" value="1"/>
</dbReference>
<dbReference type="SUPFAM" id="SSF82215">
    <property type="entry name" value="C-terminal autoproteolytic domain of nucleoporin nup98"/>
    <property type="match status" value="1"/>
</dbReference>
<dbReference type="PROSITE" id="PS51434">
    <property type="entry name" value="NUP_C"/>
    <property type="match status" value="1"/>
</dbReference>
<protein>
    <recommendedName>
        <fullName evidence="21">Nuclear pore complex protein Nup98-Nup96</fullName>
        <ecNumber evidence="1">3.4.21.-</ecNumber>
    </recommendedName>
    <component>
        <recommendedName>
            <fullName evidence="16">Nuclear pore complex protein Nup98</fullName>
        </recommendedName>
        <alternativeName>
            <fullName evidence="17">Nucleoporin Nup98</fullName>
            <shortName evidence="17">Nup98</shortName>
        </alternativeName>
    </component>
    <component>
        <recommendedName>
            <fullName evidence="17">Nuclear pore complex protein Nup96</fullName>
        </recommendedName>
        <alternativeName>
            <fullName evidence="17">Nucleoporin Nup96</fullName>
            <shortName evidence="17">Nup96</shortName>
        </alternativeName>
    </component>
</protein>
<proteinExistence type="evidence at protein level"/>
<accession>Q9VCH5</accession>
<accession>B8A421</accession>
<accession>Q6NP55</accession>
<evidence type="ECO:0000250" key="1">
    <source>
        <dbReference type="UniProtKB" id="P52948"/>
    </source>
</evidence>
<evidence type="ECO:0000255" key="2">
    <source>
        <dbReference type="PROSITE-ProRule" id="PRU00765"/>
    </source>
</evidence>
<evidence type="ECO:0000256" key="3">
    <source>
        <dbReference type="SAM" id="MobiDB-lite"/>
    </source>
</evidence>
<evidence type="ECO:0000269" key="4">
    <source>
    </source>
</evidence>
<evidence type="ECO:0000269" key="5">
    <source>
    </source>
</evidence>
<evidence type="ECO:0000269" key="6">
    <source>
    </source>
</evidence>
<evidence type="ECO:0000269" key="7">
    <source>
    </source>
</evidence>
<evidence type="ECO:0000269" key="8">
    <source>
    </source>
</evidence>
<evidence type="ECO:0000269" key="9">
    <source>
    </source>
</evidence>
<evidence type="ECO:0000269" key="10">
    <source>
    </source>
</evidence>
<evidence type="ECO:0000269" key="11">
    <source>
    </source>
</evidence>
<evidence type="ECO:0000269" key="12">
    <source>
    </source>
</evidence>
<evidence type="ECO:0000269" key="13">
    <source>
    </source>
</evidence>
<evidence type="ECO:0000269" key="14">
    <source>
    </source>
</evidence>
<evidence type="ECO:0000303" key="15">
    <source>
    </source>
</evidence>
<evidence type="ECO:0000303" key="16">
    <source>
    </source>
</evidence>
<evidence type="ECO:0000303" key="17">
    <source>
    </source>
</evidence>
<evidence type="ECO:0000305" key="18"/>
<evidence type="ECO:0000312" key="19">
    <source>
        <dbReference type="EMBL" id="AAR82742.1"/>
    </source>
</evidence>
<evidence type="ECO:0000312" key="20">
    <source>
        <dbReference type="EMBL" id="ACL68760.1"/>
    </source>
</evidence>
<evidence type="ECO:0000312" key="21">
    <source>
        <dbReference type="FlyBase" id="FBgn0039120"/>
    </source>
</evidence>
<evidence type="ECO:0000312" key="22">
    <source>
        <dbReference type="Proteomes" id="UP000000803"/>
    </source>
</evidence>